<accession>A4XZ68</accession>
<dbReference type="EMBL" id="CP000680">
    <property type="protein sequence ID" value="ABP86634.1"/>
    <property type="molecule type" value="Genomic_DNA"/>
</dbReference>
<dbReference type="SMR" id="A4XZ68"/>
<dbReference type="STRING" id="399739.Pmen_3887"/>
<dbReference type="KEGG" id="pmy:Pmen_3887"/>
<dbReference type="eggNOG" id="COG0099">
    <property type="taxonomic scope" value="Bacteria"/>
</dbReference>
<dbReference type="HOGENOM" id="CLU_103849_1_2_6"/>
<dbReference type="OrthoDB" id="9803610at2"/>
<dbReference type="GO" id="GO:0005829">
    <property type="term" value="C:cytosol"/>
    <property type="evidence" value="ECO:0007669"/>
    <property type="project" value="TreeGrafter"/>
</dbReference>
<dbReference type="GO" id="GO:0015935">
    <property type="term" value="C:small ribosomal subunit"/>
    <property type="evidence" value="ECO:0007669"/>
    <property type="project" value="TreeGrafter"/>
</dbReference>
<dbReference type="GO" id="GO:0019843">
    <property type="term" value="F:rRNA binding"/>
    <property type="evidence" value="ECO:0007669"/>
    <property type="project" value="UniProtKB-UniRule"/>
</dbReference>
<dbReference type="GO" id="GO:0003735">
    <property type="term" value="F:structural constituent of ribosome"/>
    <property type="evidence" value="ECO:0007669"/>
    <property type="project" value="InterPro"/>
</dbReference>
<dbReference type="GO" id="GO:0000049">
    <property type="term" value="F:tRNA binding"/>
    <property type="evidence" value="ECO:0007669"/>
    <property type="project" value="UniProtKB-UniRule"/>
</dbReference>
<dbReference type="GO" id="GO:0006412">
    <property type="term" value="P:translation"/>
    <property type="evidence" value="ECO:0007669"/>
    <property type="project" value="UniProtKB-UniRule"/>
</dbReference>
<dbReference type="FunFam" id="1.10.8.50:FF:000001">
    <property type="entry name" value="30S ribosomal protein S13"/>
    <property type="match status" value="1"/>
</dbReference>
<dbReference type="FunFam" id="4.10.910.10:FF:000001">
    <property type="entry name" value="30S ribosomal protein S13"/>
    <property type="match status" value="1"/>
</dbReference>
<dbReference type="Gene3D" id="1.10.8.50">
    <property type="match status" value="1"/>
</dbReference>
<dbReference type="Gene3D" id="4.10.910.10">
    <property type="entry name" value="30s ribosomal protein s13, domain 2"/>
    <property type="match status" value="1"/>
</dbReference>
<dbReference type="HAMAP" id="MF_01315">
    <property type="entry name" value="Ribosomal_uS13"/>
    <property type="match status" value="1"/>
</dbReference>
<dbReference type="InterPro" id="IPR027437">
    <property type="entry name" value="Rbsml_uS13_C"/>
</dbReference>
<dbReference type="InterPro" id="IPR001892">
    <property type="entry name" value="Ribosomal_uS13"/>
</dbReference>
<dbReference type="InterPro" id="IPR010979">
    <property type="entry name" value="Ribosomal_uS13-like_H2TH"/>
</dbReference>
<dbReference type="InterPro" id="IPR019980">
    <property type="entry name" value="Ribosomal_uS13_bac-type"/>
</dbReference>
<dbReference type="InterPro" id="IPR018269">
    <property type="entry name" value="Ribosomal_uS13_CS"/>
</dbReference>
<dbReference type="NCBIfam" id="TIGR03631">
    <property type="entry name" value="uS13_bact"/>
    <property type="match status" value="1"/>
</dbReference>
<dbReference type="PANTHER" id="PTHR10871">
    <property type="entry name" value="30S RIBOSOMAL PROTEIN S13/40S RIBOSOMAL PROTEIN S18"/>
    <property type="match status" value="1"/>
</dbReference>
<dbReference type="PANTHER" id="PTHR10871:SF1">
    <property type="entry name" value="SMALL RIBOSOMAL SUBUNIT PROTEIN US13M"/>
    <property type="match status" value="1"/>
</dbReference>
<dbReference type="Pfam" id="PF00416">
    <property type="entry name" value="Ribosomal_S13"/>
    <property type="match status" value="2"/>
</dbReference>
<dbReference type="PIRSF" id="PIRSF002134">
    <property type="entry name" value="Ribosomal_S13"/>
    <property type="match status" value="1"/>
</dbReference>
<dbReference type="SUPFAM" id="SSF46946">
    <property type="entry name" value="S13-like H2TH domain"/>
    <property type="match status" value="1"/>
</dbReference>
<dbReference type="PROSITE" id="PS00646">
    <property type="entry name" value="RIBOSOMAL_S13_1"/>
    <property type="match status" value="1"/>
</dbReference>
<dbReference type="PROSITE" id="PS50159">
    <property type="entry name" value="RIBOSOMAL_S13_2"/>
    <property type="match status" value="1"/>
</dbReference>
<organism>
    <name type="scientific">Ectopseudomonas mendocina (strain ymp)</name>
    <name type="common">Pseudomonas mendocina</name>
    <dbReference type="NCBI Taxonomy" id="399739"/>
    <lineage>
        <taxon>Bacteria</taxon>
        <taxon>Pseudomonadati</taxon>
        <taxon>Pseudomonadota</taxon>
        <taxon>Gammaproteobacteria</taxon>
        <taxon>Pseudomonadales</taxon>
        <taxon>Pseudomonadaceae</taxon>
        <taxon>Ectopseudomonas</taxon>
    </lineage>
</organism>
<proteinExistence type="inferred from homology"/>
<reference key="1">
    <citation type="submission" date="2007-04" db="EMBL/GenBank/DDBJ databases">
        <title>Complete sequence of Pseudomonas mendocina ymp.</title>
        <authorList>
            <consortium name="US DOE Joint Genome Institute"/>
            <person name="Copeland A."/>
            <person name="Lucas S."/>
            <person name="Lapidus A."/>
            <person name="Barry K."/>
            <person name="Glavina del Rio T."/>
            <person name="Dalin E."/>
            <person name="Tice H."/>
            <person name="Pitluck S."/>
            <person name="Kiss H."/>
            <person name="Brettin T."/>
            <person name="Detter J.C."/>
            <person name="Bruce D."/>
            <person name="Han C."/>
            <person name="Schmutz J."/>
            <person name="Larimer F."/>
            <person name="Land M."/>
            <person name="Hauser L."/>
            <person name="Kyrpides N."/>
            <person name="Mikhailova N."/>
            <person name="Hersman L."/>
            <person name="Dubois J."/>
            <person name="Maurice P."/>
            <person name="Richardson P."/>
        </authorList>
    </citation>
    <scope>NUCLEOTIDE SEQUENCE [LARGE SCALE GENOMIC DNA]</scope>
    <source>
        <strain>ymp</strain>
    </source>
</reference>
<evidence type="ECO:0000255" key="1">
    <source>
        <dbReference type="HAMAP-Rule" id="MF_01315"/>
    </source>
</evidence>
<evidence type="ECO:0000256" key="2">
    <source>
        <dbReference type="SAM" id="MobiDB-lite"/>
    </source>
</evidence>
<evidence type="ECO:0000305" key="3"/>
<keyword id="KW-0687">Ribonucleoprotein</keyword>
<keyword id="KW-0689">Ribosomal protein</keyword>
<keyword id="KW-0694">RNA-binding</keyword>
<keyword id="KW-0699">rRNA-binding</keyword>
<keyword id="KW-0820">tRNA-binding</keyword>
<name>RS13_ECTM1</name>
<gene>
    <name evidence="1" type="primary">rpsM</name>
    <name type="ordered locus">Pmen_3887</name>
</gene>
<comment type="function">
    <text evidence="1">Located at the top of the head of the 30S subunit, it contacts several helices of the 16S rRNA. In the 70S ribosome it contacts the 23S rRNA (bridge B1a) and protein L5 of the 50S subunit (bridge B1b), connecting the 2 subunits; these bridges are implicated in subunit movement. Contacts the tRNAs in the A and P-sites.</text>
</comment>
<comment type="subunit">
    <text evidence="1">Part of the 30S ribosomal subunit. Forms a loose heterodimer with protein S19. Forms two bridges to the 50S subunit in the 70S ribosome.</text>
</comment>
<comment type="similarity">
    <text evidence="1">Belongs to the universal ribosomal protein uS13 family.</text>
</comment>
<feature type="chain" id="PRO_1000051884" description="Small ribosomal subunit protein uS13">
    <location>
        <begin position="1"/>
        <end position="118"/>
    </location>
</feature>
<feature type="region of interest" description="Disordered" evidence="2">
    <location>
        <begin position="93"/>
        <end position="118"/>
    </location>
</feature>
<protein>
    <recommendedName>
        <fullName evidence="1">Small ribosomal subunit protein uS13</fullName>
    </recommendedName>
    <alternativeName>
        <fullName evidence="3">30S ribosomal protein S13</fullName>
    </alternativeName>
</protein>
<sequence>MARIAGVNIPDNKHTVISLTYIYGVGRTTAQKICAATGVNPAAKIKDLTDEQIEQLRGEVAKVNTEGDLRREVNMKIKRLMDLGCYRGLRHRKGLPVRGQRTKTNARTRKGPRKPIRK</sequence>